<feature type="chain" id="PRO_0000124148" description="Proteasome subunit alpha type-7-B">
    <location>
        <begin position="1"/>
        <end position="247"/>
    </location>
</feature>
<sequence length="247" mass="27935">MSYDRAITVFSPDGHLFQVEYAQEAVKKGSTAVGVRGKEIVVLGVEKKSVAKLQDERTVRKICALDENVFMAFAGLTADARIVINRARVECQSHRLTVEDPVTVEYITRYIASLKQRYTQSNGRRPFGISALIVGFDFDGTPRLYQTDPSGTYHAWKANAIGRGAKSVREFLEKHYTDEAIETDDLTIKLVIKALLEVVQSGGKNIELAVMRRDQPLKILNPEEIERYVAEIEKEKEENEKKKQKKT</sequence>
<comment type="function">
    <text>The proteasome is a multicatalytic proteinase complex which is characterized by its ability to cleave peptides with Arg, Phe, Tyr, Leu, and Glu adjacent to the leaving group at neutral or slightly basic pH. The proteasome has an ATP-dependent proteolytic activity.</text>
</comment>
<comment type="subunit">
    <text evidence="1">The 26S proteasome consists of a 20S proteasome core and two 19S regulatory subunits. The 20S proteasome core is composed of 28 subunits that are arranged in four stacked rings, resulting in a barrel-shaped structure. The two end rings are each formed by seven alpha subunits, and the two central rings are each formed by seven beta subunits. The catalytic chamber with the active sites is on the inside of the barrel (By similarity).</text>
</comment>
<comment type="subcellular location">
    <subcellularLocation>
        <location evidence="1">Cytoplasm</location>
    </subcellularLocation>
    <subcellularLocation>
        <location evidence="1">Nucleus</location>
    </subcellularLocation>
</comment>
<comment type="PTM">
    <text>Phosphorylated in G2 phase.</text>
</comment>
<comment type="similarity">
    <text evidence="2">Belongs to the peptidase T1A family.</text>
</comment>
<organism>
    <name type="scientific">Xenopus laevis</name>
    <name type="common">African clawed frog</name>
    <dbReference type="NCBI Taxonomy" id="8355"/>
    <lineage>
        <taxon>Eukaryota</taxon>
        <taxon>Metazoa</taxon>
        <taxon>Chordata</taxon>
        <taxon>Craniata</taxon>
        <taxon>Vertebrata</taxon>
        <taxon>Euteleostomi</taxon>
        <taxon>Amphibia</taxon>
        <taxon>Batrachia</taxon>
        <taxon>Anura</taxon>
        <taxon>Pipoidea</taxon>
        <taxon>Pipidae</taxon>
        <taxon>Xenopodinae</taxon>
        <taxon>Xenopus</taxon>
        <taxon>Xenopus</taxon>
    </lineage>
</organism>
<evidence type="ECO:0000250" key="1"/>
<evidence type="ECO:0000255" key="2">
    <source>
        <dbReference type="PROSITE-ProRule" id="PRU00808"/>
    </source>
</evidence>
<reference key="1">
    <citation type="journal article" date="1999" name="Gene">
        <title>Identification of the Xenopus 20S proteasome alpha 4 subunit which is modified in the meiotic cell cycle.</title>
        <authorList>
            <person name="Tokumoto M."/>
            <person name="Horiguchi R."/>
            <person name="Nagahama Y."/>
            <person name="Tokumoto T."/>
        </authorList>
    </citation>
    <scope>NUCLEOTIDE SEQUENCE [MRNA]</scope>
</reference>
<reference key="2">
    <citation type="submission" date="2004-06" db="EMBL/GenBank/DDBJ databases">
        <authorList>
            <consortium name="NIH - Xenopus Gene Collection (XGC) project"/>
        </authorList>
    </citation>
    <scope>NUCLEOTIDE SEQUENCE [LARGE SCALE MRNA]</scope>
    <source>
        <tissue>Kidney</tissue>
    </source>
</reference>
<accession>Q9PVQ1</accession>
<accession>Q6DKD4</accession>
<protein>
    <recommendedName>
        <fullName>Proteasome subunit alpha type-7-B</fullName>
    </recommendedName>
    <alternativeName>
        <fullName>Proteasome subunit alpha 4-B</fullName>
    </alternativeName>
</protein>
<dbReference type="EMBL" id="AB027463">
    <property type="protein sequence ID" value="BAA86956.1"/>
    <property type="molecule type" value="mRNA"/>
</dbReference>
<dbReference type="EMBL" id="BC074225">
    <property type="protein sequence ID" value="AAH74225.1"/>
    <property type="molecule type" value="mRNA"/>
</dbReference>
<dbReference type="RefSeq" id="NP_001083774.1">
    <property type="nucleotide sequence ID" value="NM_001090305.1"/>
</dbReference>
<dbReference type="SMR" id="Q9PVQ1"/>
<dbReference type="MEROPS" id="T01.978"/>
<dbReference type="DNASU" id="399109"/>
<dbReference type="GeneID" id="399109"/>
<dbReference type="KEGG" id="xla:399109"/>
<dbReference type="AGR" id="Xenbase:XB-GENE-6254421"/>
<dbReference type="CTD" id="399109"/>
<dbReference type="Xenbase" id="XB-GENE-6254421">
    <property type="gene designation" value="psma7.S"/>
</dbReference>
<dbReference type="OMA" id="ICMLDHH"/>
<dbReference type="OrthoDB" id="3145928at2759"/>
<dbReference type="Proteomes" id="UP000186698">
    <property type="component" value="Chromosome 9_10S"/>
</dbReference>
<dbReference type="Bgee" id="399109">
    <property type="expression patterns" value="Expressed in testis and 19 other cell types or tissues"/>
</dbReference>
<dbReference type="GO" id="GO:0005737">
    <property type="term" value="C:cytoplasm"/>
    <property type="evidence" value="ECO:0007669"/>
    <property type="project" value="UniProtKB-SubCell"/>
</dbReference>
<dbReference type="GO" id="GO:0005634">
    <property type="term" value="C:nucleus"/>
    <property type="evidence" value="ECO:0000318"/>
    <property type="project" value="GO_Central"/>
</dbReference>
<dbReference type="GO" id="GO:0005839">
    <property type="term" value="C:proteasome core complex"/>
    <property type="evidence" value="ECO:0000250"/>
    <property type="project" value="UniProtKB"/>
</dbReference>
<dbReference type="GO" id="GO:0019773">
    <property type="term" value="C:proteasome core complex, alpha-subunit complex"/>
    <property type="evidence" value="ECO:0000250"/>
    <property type="project" value="UniProtKB"/>
</dbReference>
<dbReference type="GO" id="GO:0043161">
    <property type="term" value="P:proteasome-mediated ubiquitin-dependent protein catabolic process"/>
    <property type="evidence" value="ECO:0000318"/>
    <property type="project" value="GO_Central"/>
</dbReference>
<dbReference type="CDD" id="cd03755">
    <property type="entry name" value="proteasome_alpha_type_7"/>
    <property type="match status" value="1"/>
</dbReference>
<dbReference type="FunFam" id="3.60.20.10:FF:000018">
    <property type="entry name" value="Proteasome subunit alpha type"/>
    <property type="match status" value="1"/>
</dbReference>
<dbReference type="Gene3D" id="3.60.20.10">
    <property type="entry name" value="Glutamine Phosphoribosylpyrophosphate, subunit 1, domain 1"/>
    <property type="match status" value="1"/>
</dbReference>
<dbReference type="InterPro" id="IPR029055">
    <property type="entry name" value="Ntn_hydrolases_N"/>
</dbReference>
<dbReference type="InterPro" id="IPR050115">
    <property type="entry name" value="Proteasome_alpha"/>
</dbReference>
<dbReference type="InterPro" id="IPR023332">
    <property type="entry name" value="Proteasome_alpha-type"/>
</dbReference>
<dbReference type="InterPro" id="IPR000426">
    <property type="entry name" value="Proteasome_asu_N"/>
</dbReference>
<dbReference type="InterPro" id="IPR001353">
    <property type="entry name" value="Proteasome_sua/b"/>
</dbReference>
<dbReference type="NCBIfam" id="NF003075">
    <property type="entry name" value="PRK03996.1"/>
    <property type="match status" value="1"/>
</dbReference>
<dbReference type="PANTHER" id="PTHR11599">
    <property type="entry name" value="PROTEASOME SUBUNIT ALPHA/BETA"/>
    <property type="match status" value="1"/>
</dbReference>
<dbReference type="Pfam" id="PF00227">
    <property type="entry name" value="Proteasome"/>
    <property type="match status" value="1"/>
</dbReference>
<dbReference type="Pfam" id="PF10584">
    <property type="entry name" value="Proteasome_A_N"/>
    <property type="match status" value="1"/>
</dbReference>
<dbReference type="SMART" id="SM00948">
    <property type="entry name" value="Proteasome_A_N"/>
    <property type="match status" value="1"/>
</dbReference>
<dbReference type="SUPFAM" id="SSF56235">
    <property type="entry name" value="N-terminal nucleophile aminohydrolases (Ntn hydrolases)"/>
    <property type="match status" value="1"/>
</dbReference>
<dbReference type="PROSITE" id="PS00388">
    <property type="entry name" value="PROTEASOME_ALPHA_1"/>
    <property type="match status" value="1"/>
</dbReference>
<dbReference type="PROSITE" id="PS51475">
    <property type="entry name" value="PROTEASOME_ALPHA_2"/>
    <property type="match status" value="1"/>
</dbReference>
<proteinExistence type="evidence at transcript level"/>
<name>PSA7B_XENLA</name>
<gene>
    <name type="primary">psma7-b</name>
</gene>
<keyword id="KW-0963">Cytoplasm</keyword>
<keyword id="KW-0539">Nucleus</keyword>
<keyword id="KW-0597">Phosphoprotein</keyword>
<keyword id="KW-0647">Proteasome</keyword>
<keyword id="KW-1185">Reference proteome</keyword>